<sequence length="714" mass="77770">MLVHLFRVGIRGGPVPRWSLQSLRFQTFSAARSSDDQFSSCLLRAVAQLRSQLRAHLPRSPPASHRSTSAWCWVGGTLVVPAVLWQHPRFCLIALCEAKGSPPAQPTRARELRFKWKLFWHFLHPHLLALGLAIVLALGAALVNVQIPLLLGQLVEIVAKYTREHVGSFVSESRRLSIQLLLLYGVQGLLTFGYLVLLSHMGERMAMDMRKALFSSLLRQDIAFFDAKKTGQLVSRLTTDVQEFKSSFKLVISQGLRSSTQVIGSLMTLSILSPRLTLMLAVVTPALMGVGTLMGSGLRKLSRQCQEQIARATGVADEALGSVRTVRAFAMEKREEERYQAELESCCCKAEELGRGIALFQGLSNIAFNCMVLGTLFIGGSLVAGQQLKGGDLMSFLVASQTVQRSMASLSVLFGQVVRGLSAGARVFEYMSLSPVIPLTGGYSIPSKDLRGSITFQNVSFSYPCRPGFNVLKNFTLKLPPGKIVALVGQSGGGKTTVASLLERFYDPTAGVVTLDGHDLRTLDPSWLRGQVIGFISQEPVLFATTIMENIRFGKLDASDEEVYTAARKANAHEFISSFPDGYSTVVGERGTTLSGGQKQRLAIARALIKRPTVLILDEATSALDAESERIVQEALDRASAGRTVLVIAHRLSTVRAAHSIIVMANGQVCEAGTHEELLQKGGLYAELIRRQALDASLPSAPPAEKPEDHRSCQ</sequence>
<organism>
    <name type="scientific">Rattus norvegicus</name>
    <name type="common">Rat</name>
    <dbReference type="NCBI Taxonomy" id="10116"/>
    <lineage>
        <taxon>Eukaryota</taxon>
        <taxon>Metazoa</taxon>
        <taxon>Chordata</taxon>
        <taxon>Craniata</taxon>
        <taxon>Vertebrata</taxon>
        <taxon>Euteleostomi</taxon>
        <taxon>Mammalia</taxon>
        <taxon>Eutheria</taxon>
        <taxon>Euarchontoglires</taxon>
        <taxon>Glires</taxon>
        <taxon>Rodentia</taxon>
        <taxon>Myomorpha</taxon>
        <taxon>Muroidea</taxon>
        <taxon>Muridae</taxon>
        <taxon>Murinae</taxon>
        <taxon>Rattus</taxon>
    </lineage>
</organism>
<dbReference type="EMBL" id="DQ233644">
    <property type="protein sequence ID" value="ABB71108.1"/>
    <property type="status" value="ALT_FRAME"/>
    <property type="molecule type" value="mRNA"/>
</dbReference>
<dbReference type="EMBL" id="CH474020">
    <property type="protein sequence ID" value="EDL99373.1"/>
    <property type="molecule type" value="Genomic_DNA"/>
</dbReference>
<dbReference type="EMBL" id="BC085781">
    <property type="protein sequence ID" value="AAH85781.1"/>
    <property type="molecule type" value="mRNA"/>
</dbReference>
<dbReference type="RefSeq" id="NP_001007797.1">
    <property type="nucleotide sequence ID" value="NM_001007796.2"/>
</dbReference>
<dbReference type="SMR" id="Q5RKI8"/>
<dbReference type="CORUM" id="Q5RKI8"/>
<dbReference type="FunCoup" id="Q5RKI8">
    <property type="interactions" value="991"/>
</dbReference>
<dbReference type="STRING" id="10116.ENSRNOP00000071952"/>
<dbReference type="iPTMnet" id="Q5RKI8"/>
<dbReference type="PhosphoSitePlus" id="Q5RKI8"/>
<dbReference type="SwissPalm" id="Q5RKI8"/>
<dbReference type="PaxDb" id="10116-ENSRNOP00000012222"/>
<dbReference type="Ensembl" id="ENSRNOT00000012222.7">
    <property type="protein sequence ID" value="ENSRNOP00000012222.5"/>
    <property type="gene ID" value="ENSRNOG00000008557.7"/>
</dbReference>
<dbReference type="GeneID" id="362302"/>
<dbReference type="KEGG" id="rno:362302"/>
<dbReference type="AGR" id="RGD:1307655"/>
<dbReference type="CTD" id="11194"/>
<dbReference type="RGD" id="1307655">
    <property type="gene designation" value="Abcb8"/>
</dbReference>
<dbReference type="eggNOG" id="KOG0058">
    <property type="taxonomic scope" value="Eukaryota"/>
</dbReference>
<dbReference type="GeneTree" id="ENSGT00940000159126"/>
<dbReference type="InParanoid" id="Q5RKI8"/>
<dbReference type="OMA" id="MTWLGER"/>
<dbReference type="OrthoDB" id="6500128at2759"/>
<dbReference type="PhylomeDB" id="Q5RKI8"/>
<dbReference type="TreeFam" id="TF105196"/>
<dbReference type="Reactome" id="R-RNO-1369007">
    <property type="pathway name" value="Mitochondrial ABC transporters"/>
</dbReference>
<dbReference type="PRO" id="PR:Q5RKI8"/>
<dbReference type="Proteomes" id="UP000002494">
    <property type="component" value="Chromosome 4"/>
</dbReference>
<dbReference type="Proteomes" id="UP000234681">
    <property type="component" value="Chromosome 4"/>
</dbReference>
<dbReference type="Bgee" id="ENSRNOG00000008557">
    <property type="expression patterns" value="Expressed in heart and 18 other cell types or tissues"/>
</dbReference>
<dbReference type="ExpressionAtlas" id="Q5RKI8">
    <property type="expression patterns" value="baseline and differential"/>
</dbReference>
<dbReference type="GO" id="GO:0016020">
    <property type="term" value="C:membrane"/>
    <property type="evidence" value="ECO:0000318"/>
    <property type="project" value="GO_Central"/>
</dbReference>
<dbReference type="GO" id="GO:0062157">
    <property type="term" value="C:mitochondrial ATP-gated potassium channel complex"/>
    <property type="evidence" value="ECO:0000250"/>
    <property type="project" value="UniProtKB"/>
</dbReference>
<dbReference type="GO" id="GO:0005743">
    <property type="term" value="C:mitochondrial inner membrane"/>
    <property type="evidence" value="ECO:0000266"/>
    <property type="project" value="RGD"/>
</dbReference>
<dbReference type="GO" id="GO:0031966">
    <property type="term" value="C:mitochondrial membrane"/>
    <property type="evidence" value="ECO:0000266"/>
    <property type="project" value="RGD"/>
</dbReference>
<dbReference type="GO" id="GO:0005739">
    <property type="term" value="C:mitochondrion"/>
    <property type="evidence" value="ECO:0000250"/>
    <property type="project" value="UniProtKB"/>
</dbReference>
<dbReference type="GO" id="GO:0005730">
    <property type="term" value="C:nucleolus"/>
    <property type="evidence" value="ECO:0007669"/>
    <property type="project" value="Ensembl"/>
</dbReference>
<dbReference type="GO" id="GO:0005654">
    <property type="term" value="C:nucleoplasm"/>
    <property type="evidence" value="ECO:0007669"/>
    <property type="project" value="Ensembl"/>
</dbReference>
<dbReference type="GO" id="GO:0140359">
    <property type="term" value="F:ABC-type transporter activity"/>
    <property type="evidence" value="ECO:0007669"/>
    <property type="project" value="InterPro"/>
</dbReference>
<dbReference type="GO" id="GO:0005524">
    <property type="term" value="F:ATP binding"/>
    <property type="evidence" value="ECO:0000250"/>
    <property type="project" value="UniProtKB"/>
</dbReference>
<dbReference type="GO" id="GO:0016887">
    <property type="term" value="F:ATP hydrolysis activity"/>
    <property type="evidence" value="ECO:0007669"/>
    <property type="project" value="InterPro"/>
</dbReference>
<dbReference type="GO" id="GO:0042626">
    <property type="term" value="F:ATPase-coupled transmembrane transporter activity"/>
    <property type="evidence" value="ECO:0000318"/>
    <property type="project" value="GO_Central"/>
</dbReference>
<dbReference type="GO" id="GO:0006884">
    <property type="term" value="P:cell volume homeostasis"/>
    <property type="evidence" value="ECO:0000266"/>
    <property type="project" value="RGD"/>
</dbReference>
<dbReference type="GO" id="GO:0140141">
    <property type="term" value="P:mitochondrial potassium ion transmembrane transport"/>
    <property type="evidence" value="ECO:0000266"/>
    <property type="project" value="RGD"/>
</dbReference>
<dbReference type="GO" id="GO:0071805">
    <property type="term" value="P:potassium ion transmembrane transport"/>
    <property type="evidence" value="ECO:0000250"/>
    <property type="project" value="UniProtKB"/>
</dbReference>
<dbReference type="GO" id="GO:0055085">
    <property type="term" value="P:transmembrane transport"/>
    <property type="evidence" value="ECO:0000318"/>
    <property type="project" value="GO_Central"/>
</dbReference>
<dbReference type="CDD" id="cd18574">
    <property type="entry name" value="ABC_6TM_ABCB8_like"/>
    <property type="match status" value="1"/>
</dbReference>
<dbReference type="CDD" id="cd03249">
    <property type="entry name" value="ABC_MTABC3_MDL1_MDL2"/>
    <property type="match status" value="1"/>
</dbReference>
<dbReference type="FunFam" id="1.20.1560.10:FF:000016">
    <property type="entry name" value="ATP-binding cassette sub-family B member 8, mitochondrial"/>
    <property type="match status" value="1"/>
</dbReference>
<dbReference type="FunFam" id="3.40.50.300:FF:000403">
    <property type="entry name" value="ATP-binding cassette sub-family B member 8, mitochondrial"/>
    <property type="match status" value="1"/>
</dbReference>
<dbReference type="Gene3D" id="1.20.1560.10">
    <property type="entry name" value="ABC transporter type 1, transmembrane domain"/>
    <property type="match status" value="1"/>
</dbReference>
<dbReference type="Gene3D" id="3.40.50.300">
    <property type="entry name" value="P-loop containing nucleotide triphosphate hydrolases"/>
    <property type="match status" value="1"/>
</dbReference>
<dbReference type="InterPro" id="IPR003593">
    <property type="entry name" value="AAA+_ATPase"/>
</dbReference>
<dbReference type="InterPro" id="IPR011527">
    <property type="entry name" value="ABC1_TM_dom"/>
</dbReference>
<dbReference type="InterPro" id="IPR036640">
    <property type="entry name" value="ABC1_TM_sf"/>
</dbReference>
<dbReference type="InterPro" id="IPR003439">
    <property type="entry name" value="ABC_transporter-like_ATP-bd"/>
</dbReference>
<dbReference type="InterPro" id="IPR017871">
    <property type="entry name" value="ABC_transporter-like_CS"/>
</dbReference>
<dbReference type="InterPro" id="IPR027417">
    <property type="entry name" value="P-loop_NTPase"/>
</dbReference>
<dbReference type="InterPro" id="IPR039421">
    <property type="entry name" value="Type_1_exporter"/>
</dbReference>
<dbReference type="PANTHER" id="PTHR43394">
    <property type="entry name" value="ATP-DEPENDENT PERMEASE MDL1, MITOCHONDRIAL"/>
    <property type="match status" value="1"/>
</dbReference>
<dbReference type="PANTHER" id="PTHR43394:SF17">
    <property type="entry name" value="MITOCHONDRIAL POTASSIUM CHANNEL ATP-BINDING SUBUNIT"/>
    <property type="match status" value="1"/>
</dbReference>
<dbReference type="Pfam" id="PF00664">
    <property type="entry name" value="ABC_membrane"/>
    <property type="match status" value="1"/>
</dbReference>
<dbReference type="Pfam" id="PF00005">
    <property type="entry name" value="ABC_tran"/>
    <property type="match status" value="1"/>
</dbReference>
<dbReference type="PIRSF" id="PIRSF002773">
    <property type="entry name" value="ABC_prm/ATPase_B"/>
    <property type="match status" value="1"/>
</dbReference>
<dbReference type="SMART" id="SM00382">
    <property type="entry name" value="AAA"/>
    <property type="match status" value="1"/>
</dbReference>
<dbReference type="SUPFAM" id="SSF90123">
    <property type="entry name" value="ABC transporter transmembrane region"/>
    <property type="match status" value="1"/>
</dbReference>
<dbReference type="SUPFAM" id="SSF52540">
    <property type="entry name" value="P-loop containing nucleoside triphosphate hydrolases"/>
    <property type="match status" value="1"/>
</dbReference>
<dbReference type="PROSITE" id="PS50929">
    <property type="entry name" value="ABC_TM1F"/>
    <property type="match status" value="1"/>
</dbReference>
<dbReference type="PROSITE" id="PS00211">
    <property type="entry name" value="ABC_TRANSPORTER_1"/>
    <property type="match status" value="1"/>
</dbReference>
<dbReference type="PROSITE" id="PS50893">
    <property type="entry name" value="ABC_TRANSPORTER_2"/>
    <property type="match status" value="1"/>
</dbReference>
<evidence type="ECO:0000250" key="1">
    <source>
        <dbReference type="UniProtKB" id="Q9CXJ4"/>
    </source>
</evidence>
<evidence type="ECO:0000250" key="2">
    <source>
        <dbReference type="UniProtKB" id="Q9NUT2"/>
    </source>
</evidence>
<evidence type="ECO:0000255" key="3"/>
<evidence type="ECO:0000255" key="4">
    <source>
        <dbReference type="PROSITE-ProRule" id="PRU00434"/>
    </source>
</evidence>
<evidence type="ECO:0000255" key="5">
    <source>
        <dbReference type="PROSITE-ProRule" id="PRU00441"/>
    </source>
</evidence>
<evidence type="ECO:0000269" key="6">
    <source>
    </source>
</evidence>
<evidence type="ECO:0000303" key="7">
    <source>
    </source>
</evidence>
<evidence type="ECO:0000305" key="8"/>
<name>MITOS_RAT</name>
<protein>
    <recommendedName>
        <fullName evidence="8">Mitochondrial potassium channel ATP-binding subunit</fullName>
    </recommendedName>
    <alternativeName>
        <fullName evidence="7">ATP-binding cassette sub-family B member 8, mitochondrial</fullName>
        <shortName evidence="7">ABCB8</shortName>
    </alternativeName>
    <alternativeName>
        <fullName evidence="2">Mitochondrial sulfonylurea-receptor</fullName>
        <shortName evidence="2">MITOSUR</shortName>
    </alternativeName>
</protein>
<feature type="transit peptide" description="Mitochondrion" evidence="3">
    <location>
        <begin position="1"/>
        <end position="25"/>
    </location>
</feature>
<feature type="chain" id="PRO_0000356235" description="Mitochondrial potassium channel ATP-binding subunit" evidence="3">
    <location>
        <begin position="26"/>
        <end position="714"/>
    </location>
</feature>
<feature type="transmembrane region" description="Helical" evidence="3 5">
    <location>
        <begin position="127"/>
        <end position="147"/>
    </location>
</feature>
<feature type="transmembrane region" description="Helical" evidence="3 5">
    <location>
        <begin position="178"/>
        <end position="198"/>
    </location>
</feature>
<feature type="transmembrane region" description="Helical" evidence="3 5">
    <location>
        <begin position="278"/>
        <end position="298"/>
    </location>
</feature>
<feature type="transmembrane region" description="Helical" evidence="3 5">
    <location>
        <begin position="365"/>
        <end position="385"/>
    </location>
</feature>
<feature type="domain" description="ABC transmembrane type-1" evidence="5">
    <location>
        <begin position="132"/>
        <end position="419"/>
    </location>
</feature>
<feature type="domain" description="ABC transporter" evidence="4">
    <location>
        <begin position="454"/>
        <end position="691"/>
    </location>
</feature>
<feature type="binding site" evidence="4">
    <location>
        <begin position="489"/>
        <end position="496"/>
    </location>
    <ligand>
        <name>ATP</name>
        <dbReference type="ChEBI" id="CHEBI:30616"/>
    </ligand>
</feature>
<feature type="sequence conflict" description="In Ref. 1; ABB71108." evidence="8" ref="1">
    <original>P</original>
    <variation>T</variation>
    <location>
        <position position="540"/>
    </location>
</feature>
<feature type="sequence conflict" description="In Ref. 1; ABB71108." evidence="8" ref="1">
    <original>S</original>
    <variation>C</variation>
    <location>
        <position position="578"/>
    </location>
</feature>
<proteinExistence type="evidence at transcript level"/>
<comment type="function">
    <text evidence="1 2">ATP-binding subunit of the mitochondrial ATP-gated potassium channel (mitoK(ATP)). v. An increase in ATP intracellular levels closes the channel, inhibiting K(+) transport, whereas a decrease in ATP levels enhances K(+) uptake in the mitochondrial matrix (By similarity). Plays a role in mitochondrial iron transport (By similarity). Required for maintenance of normal cardiac function, possibly by influencing mitochondrial iron export and regulating the maturation of cytosolic iron sulfur cluster-containing enzymes (By similarity).</text>
</comment>
<comment type="activity regulation">
    <text evidence="2">Channel activity inhibited by ATP via ABCB8/MITOSUR subunit.</text>
</comment>
<comment type="subunit">
    <text evidence="2">The mitochondrial potassium channel (mitoK(ATP)) is composed of 4 subunits of CCDC51/MITOK and 4 subunits of ABCB8/MITOSUR. Physically interacts with PAAT. Interacts with Neuropilin-1 (NRP1) in mitochondria.</text>
</comment>
<comment type="subcellular location">
    <subcellularLocation>
        <location evidence="2">Mitochondrion inner membrane</location>
        <topology evidence="5">Multi-pass membrane protein</topology>
    </subcellularLocation>
</comment>
<comment type="tissue specificity">
    <text evidence="6">Strong expression is found in the heart, brain and testis (PubMed:16390497). In the testis, expressed both in the somatic Sertoli cells and peritubular cells and in the germline (spermatogonia and pachytene spermatocytes) (PubMed:16390497). Also expressed in the lung, liver, intestine and kidney (PubMed:16390497).</text>
</comment>
<comment type="similarity">
    <text evidence="8">Belongs to the ABC transporter superfamily. ABCB family. Multidrug resistance exporter (TC 3.A.1.201) subfamily.</text>
</comment>
<comment type="sequence caution" evidence="8">
    <conflict type="frameshift">
        <sequence resource="EMBL-CDS" id="ABB71108"/>
    </conflict>
</comment>
<accession>Q5RKI8</accession>
<accession>Q0QVT4</accession>
<gene>
    <name evidence="7" type="primary">Abcb8</name>
    <name evidence="2" type="synonym">Mitosur</name>
</gene>
<keyword id="KW-0067">ATP-binding</keyword>
<keyword id="KW-0406">Ion transport</keyword>
<keyword id="KW-0472">Membrane</keyword>
<keyword id="KW-0496">Mitochondrion</keyword>
<keyword id="KW-0999">Mitochondrion inner membrane</keyword>
<keyword id="KW-0547">Nucleotide-binding</keyword>
<keyword id="KW-0630">Potassium</keyword>
<keyword id="KW-0633">Potassium transport</keyword>
<keyword id="KW-1185">Reference proteome</keyword>
<keyword id="KW-0809">Transit peptide</keyword>
<keyword id="KW-0812">Transmembrane</keyword>
<keyword id="KW-1133">Transmembrane helix</keyword>
<keyword id="KW-0813">Transport</keyword>
<reference key="1">
    <citation type="journal article" date="2006" name="Int. J. Androl.">
        <title>Molecular cloning of several rat ABC transporters including a new ABC transporter, Abcb8, and their expression in rat testis.</title>
        <authorList>
            <person name="Melaine N."/>
            <person name="Satie A.-P."/>
            <person name="Lassurguere J."/>
            <person name="Desmots S."/>
            <person name="Jegou B."/>
            <person name="Samson M."/>
        </authorList>
    </citation>
    <scope>NUCLEOTIDE SEQUENCE [MRNA]</scope>
    <scope>TISSUE SPECIFICITY</scope>
</reference>
<reference key="2">
    <citation type="submission" date="2005-07" db="EMBL/GenBank/DDBJ databases">
        <authorList>
            <person name="Mural R.J."/>
            <person name="Adams M.D."/>
            <person name="Myers E.W."/>
            <person name="Smith H.O."/>
            <person name="Venter J.C."/>
        </authorList>
    </citation>
    <scope>NUCLEOTIDE SEQUENCE [LARGE SCALE GENOMIC DNA]</scope>
</reference>
<reference key="3">
    <citation type="journal article" date="2004" name="Genome Res.">
        <title>The status, quality, and expansion of the NIH full-length cDNA project: the Mammalian Gene Collection (MGC).</title>
        <authorList>
            <consortium name="The MGC Project Team"/>
        </authorList>
    </citation>
    <scope>NUCLEOTIDE SEQUENCE [LARGE SCALE MRNA]</scope>
    <source>
        <tissue>Kidney</tissue>
    </source>
</reference>